<accession>P47214</accession>
<sequence length="29" mass="3114">GWTLNSAGYLLGPHAVDNHRSLNDKHGLA</sequence>
<feature type="peptide" id="PRO_0000043875" description="Galanin">
    <location>
        <begin position="1"/>
        <end position="29"/>
    </location>
</feature>
<feature type="modified residue" description="Alanine amide" evidence="1">
    <location>
        <position position="29"/>
    </location>
</feature>
<dbReference type="GO" id="GO:0005615">
    <property type="term" value="C:extracellular space"/>
    <property type="evidence" value="ECO:0007669"/>
    <property type="project" value="TreeGrafter"/>
</dbReference>
<dbReference type="GO" id="GO:0030141">
    <property type="term" value="C:secretory granule"/>
    <property type="evidence" value="ECO:0007669"/>
    <property type="project" value="TreeGrafter"/>
</dbReference>
<dbReference type="GO" id="GO:0031763">
    <property type="term" value="F:galanin receptor binding"/>
    <property type="evidence" value="ECO:0007669"/>
    <property type="project" value="TreeGrafter"/>
</dbReference>
<dbReference type="GO" id="GO:0005184">
    <property type="term" value="F:neuropeptide hormone activity"/>
    <property type="evidence" value="ECO:0007669"/>
    <property type="project" value="TreeGrafter"/>
</dbReference>
<dbReference type="GO" id="GO:0007218">
    <property type="term" value="P:neuropeptide signaling pathway"/>
    <property type="evidence" value="ECO:0007669"/>
    <property type="project" value="UniProtKB-KW"/>
</dbReference>
<dbReference type="InterPro" id="IPR008174">
    <property type="entry name" value="Galanin"/>
</dbReference>
<dbReference type="InterPro" id="IPR008175">
    <property type="entry name" value="Galanin_pre"/>
</dbReference>
<dbReference type="PANTHER" id="PTHR16839">
    <property type="entry name" value="GALANIN"/>
    <property type="match status" value="1"/>
</dbReference>
<dbReference type="PANTHER" id="PTHR16839:SF1">
    <property type="entry name" value="GALANIN PEPTIDES"/>
    <property type="match status" value="1"/>
</dbReference>
<dbReference type="Pfam" id="PF01296">
    <property type="entry name" value="Galanin"/>
    <property type="match status" value="1"/>
</dbReference>
<dbReference type="PRINTS" id="PR00273">
    <property type="entry name" value="GALANIN"/>
</dbReference>
<dbReference type="PROSITE" id="PS00861">
    <property type="entry name" value="GALANIN"/>
    <property type="match status" value="1"/>
</dbReference>
<evidence type="ECO:0000269" key="1">
    <source>
    </source>
</evidence>
<evidence type="ECO:0000305" key="2"/>
<protein>
    <recommendedName>
        <fullName>Galanin</fullName>
    </recommendedName>
</protein>
<proteinExistence type="evidence at protein level"/>
<organism>
    <name type="scientific">Amia calva</name>
    <name type="common">Bowfin</name>
    <dbReference type="NCBI Taxonomy" id="7924"/>
    <lineage>
        <taxon>Eukaryota</taxon>
        <taxon>Metazoa</taxon>
        <taxon>Chordata</taxon>
        <taxon>Craniata</taxon>
        <taxon>Vertebrata</taxon>
        <taxon>Euteleostomi</taxon>
        <taxon>Actinopterygii</taxon>
        <taxon>Neopterygii</taxon>
        <taxon>Holostei</taxon>
        <taxon>Amiiformes</taxon>
        <taxon>Amiidae</taxon>
        <taxon>Amia</taxon>
    </lineage>
</organism>
<gene>
    <name type="primary">gal</name>
</gene>
<name>GALA_AMICA</name>
<keyword id="KW-0027">Amidation</keyword>
<keyword id="KW-0903">Direct protein sequencing</keyword>
<keyword id="KW-0372">Hormone</keyword>
<keyword id="KW-0527">Neuropeptide</keyword>
<keyword id="KW-0964">Secreted</keyword>
<reference key="1">
    <citation type="journal article" date="1994" name="Peptides">
        <title>Purification and characterization of galanin from the phylogenetically ancient fish, the bowfin (Amia calva) and dogfish (Scyliorhinus canicula).</title>
        <authorList>
            <person name="Wang Y."/>
            <person name="Conlon J.M."/>
        </authorList>
    </citation>
    <scope>PROTEIN SEQUENCE</scope>
    <scope>AMIDATION AT ALA-29</scope>
    <source>
        <tissue>Stomach</tissue>
    </source>
</reference>
<comment type="function">
    <text>Contracts smooth muscle of the gastrointestinal and genitourinary tract, regulates growth hormone release, modulates insulin release, and may be involved in the control of adrenal secretion.</text>
</comment>
<comment type="subcellular location">
    <subcellularLocation>
        <location>Secreted</location>
    </subcellularLocation>
</comment>
<comment type="similarity">
    <text evidence="2">Belongs to the galanin family.</text>
</comment>